<accession>Q1R7T4</accession>
<comment type="function">
    <text evidence="1">Component of the sulfite reductase complex that catalyzes the 6-electron reduction of sulfite to sulfide. This is one of several activities required for the biosynthesis of L-cysteine from sulfate. The flavoprotein component catalyzes the electron flow from NADPH -&gt; FAD -&gt; FMN to the hemoprotein component.</text>
</comment>
<comment type="catalytic activity">
    <reaction evidence="1">
        <text>hydrogen sulfide + 3 NADP(+) + 3 H2O = sulfite + 3 NADPH + 4 H(+)</text>
        <dbReference type="Rhea" id="RHEA:13801"/>
        <dbReference type="ChEBI" id="CHEBI:15377"/>
        <dbReference type="ChEBI" id="CHEBI:15378"/>
        <dbReference type="ChEBI" id="CHEBI:17359"/>
        <dbReference type="ChEBI" id="CHEBI:29919"/>
        <dbReference type="ChEBI" id="CHEBI:57783"/>
        <dbReference type="ChEBI" id="CHEBI:58349"/>
        <dbReference type="EC" id="1.8.1.2"/>
    </reaction>
</comment>
<comment type="cofactor">
    <cofactor evidence="1">
        <name>FAD</name>
        <dbReference type="ChEBI" id="CHEBI:57692"/>
    </cofactor>
    <text evidence="1">Binds 1 FAD per subunit.</text>
</comment>
<comment type="cofactor">
    <cofactor evidence="1">
        <name>FMN</name>
        <dbReference type="ChEBI" id="CHEBI:58210"/>
    </cofactor>
    <text evidence="1">Binds 1 FMN per subunit.</text>
</comment>
<comment type="pathway">
    <text evidence="1">Sulfur metabolism; hydrogen sulfide biosynthesis; hydrogen sulfide from sulfite (NADPH route): step 1/1.</text>
</comment>
<comment type="subunit">
    <text evidence="1">Alpha(8)-beta(8). The alpha component is a flavoprotein, the beta component is a hemoprotein.</text>
</comment>
<comment type="similarity">
    <text evidence="1">Belongs to the NADPH-dependent sulphite reductase flavoprotein subunit CysJ family.</text>
</comment>
<comment type="similarity">
    <text evidence="1">In the N-terminal section; belongs to the flavodoxin family.</text>
</comment>
<comment type="similarity">
    <text evidence="1">In the C-terminal section; belongs to the flavoprotein pyridine nucleotide cytochrome reductase family.</text>
</comment>
<reference key="1">
    <citation type="journal article" date="2006" name="Proc. Natl. Acad. Sci. U.S.A.">
        <title>Identification of genes subject to positive selection in uropathogenic strains of Escherichia coli: a comparative genomics approach.</title>
        <authorList>
            <person name="Chen S.L."/>
            <person name="Hung C.-S."/>
            <person name="Xu J."/>
            <person name="Reigstad C.S."/>
            <person name="Magrini V."/>
            <person name="Sabo A."/>
            <person name="Blasiar D."/>
            <person name="Bieri T."/>
            <person name="Meyer R.R."/>
            <person name="Ozersky P."/>
            <person name="Armstrong J.R."/>
            <person name="Fulton R.S."/>
            <person name="Latreille J.P."/>
            <person name="Spieth J."/>
            <person name="Hooton T.M."/>
            <person name="Mardis E.R."/>
            <person name="Hultgren S.J."/>
            <person name="Gordon J.I."/>
        </authorList>
    </citation>
    <scope>NUCLEOTIDE SEQUENCE [LARGE SCALE GENOMIC DNA]</scope>
    <source>
        <strain>UTI89 / UPEC</strain>
    </source>
</reference>
<sequence length="599" mass="66312">MTTQVPPSALLPLNPEQLARLQAATTDLTPTQLAWVSGYFWGVLNQQPAALAATPAPAAEMPGITIISASQTGNARRVAEALRDDLLAAKLNVKLVNAGDYKFKQIASEKLLIVVTSTQGEGEPPEEAVALHKFLFSKKAPKLENTAFAVFSLGDSSYEFFCQSGKDFDSKLAELGGERLLDRVDADVEYQAAASEWRARVVDALKSRAPVAAPSQSVATGTVNEIHTSPYSKDAPLAASLSVNQKITGRNSEKDVRHIEIDLGDSGLRYQPGDALGVWYQNDPALVKELVELLWLKGDEPVTVEGKTLPLNEALQWHFELTVNTANIVENYATLTRSETLLPLVGDKAKLQHYAATTPIVDMVRFSPAQLDAEALINLLRPLTPRLYSIASSQAEVENEVHVTVGVVRYDVEGRARAGGASSFLADRVEEEGEVRVFIEHNDNFRLPTNPETPVIMIGPGTGIAPFRAFMQQRAADEAPGKNWLFFGNPHFTEDFLYQVEWQRYVKEGVLTRIDLAWSRDQKEKIYVQDKLREQGAELWRWINDGAHIYVCGDANRMAKDVEQALLEVIAEFGGMDTEAADEFLSELRVERRYQRDVY</sequence>
<proteinExistence type="inferred from homology"/>
<dbReference type="EC" id="1.8.1.2" evidence="1"/>
<dbReference type="EMBL" id="CP000243">
    <property type="protein sequence ID" value="ABE08580.1"/>
    <property type="molecule type" value="Genomic_DNA"/>
</dbReference>
<dbReference type="RefSeq" id="WP_000211914.1">
    <property type="nucleotide sequence ID" value="NZ_CP064825.1"/>
</dbReference>
<dbReference type="SMR" id="Q1R7T4"/>
<dbReference type="KEGG" id="eci:UTI89_C3128"/>
<dbReference type="HOGENOM" id="CLU_001570_17_7_6"/>
<dbReference type="UniPathway" id="UPA00140">
    <property type="reaction ID" value="UER00207"/>
</dbReference>
<dbReference type="Proteomes" id="UP000001952">
    <property type="component" value="Chromosome"/>
</dbReference>
<dbReference type="GO" id="GO:0005829">
    <property type="term" value="C:cytosol"/>
    <property type="evidence" value="ECO:0007669"/>
    <property type="project" value="TreeGrafter"/>
</dbReference>
<dbReference type="GO" id="GO:0050660">
    <property type="term" value="F:flavin adenine dinucleotide binding"/>
    <property type="evidence" value="ECO:0007669"/>
    <property type="project" value="InterPro"/>
</dbReference>
<dbReference type="GO" id="GO:0010181">
    <property type="term" value="F:FMN binding"/>
    <property type="evidence" value="ECO:0007669"/>
    <property type="project" value="InterPro"/>
</dbReference>
<dbReference type="GO" id="GO:0004783">
    <property type="term" value="F:sulfite reductase (NADPH) activity"/>
    <property type="evidence" value="ECO:0007669"/>
    <property type="project" value="UniProtKB-UniRule"/>
</dbReference>
<dbReference type="GO" id="GO:0019344">
    <property type="term" value="P:cysteine biosynthetic process"/>
    <property type="evidence" value="ECO:0007669"/>
    <property type="project" value="UniProtKB-KW"/>
</dbReference>
<dbReference type="GO" id="GO:0070814">
    <property type="term" value="P:hydrogen sulfide biosynthetic process"/>
    <property type="evidence" value="ECO:0007669"/>
    <property type="project" value="UniProtKB-UniRule"/>
</dbReference>
<dbReference type="GO" id="GO:0000103">
    <property type="term" value="P:sulfate assimilation"/>
    <property type="evidence" value="ECO:0007669"/>
    <property type="project" value="UniProtKB-UniRule"/>
</dbReference>
<dbReference type="CDD" id="cd06199">
    <property type="entry name" value="SiR"/>
    <property type="match status" value="1"/>
</dbReference>
<dbReference type="FunFam" id="3.40.50.80:FF:000001">
    <property type="entry name" value="NADPH--cytochrome P450 reductase 1"/>
    <property type="match status" value="1"/>
</dbReference>
<dbReference type="FunFam" id="1.20.990.10:FF:000004">
    <property type="entry name" value="Sulfite reductase [NADPH] flavoprotein alpha-component"/>
    <property type="match status" value="1"/>
</dbReference>
<dbReference type="FunFam" id="3.40.50.360:FF:000018">
    <property type="entry name" value="Sulfite reductase [NADPH] flavoprotein alpha-component"/>
    <property type="match status" value="1"/>
</dbReference>
<dbReference type="Gene3D" id="3.40.50.360">
    <property type="match status" value="1"/>
</dbReference>
<dbReference type="Gene3D" id="1.20.990.10">
    <property type="entry name" value="NADPH-cytochrome p450 Reductase, Chain A, domain 3"/>
    <property type="match status" value="1"/>
</dbReference>
<dbReference type="Gene3D" id="3.40.50.80">
    <property type="entry name" value="Nucleotide-binding domain of ferredoxin-NADP reductase (FNR) module"/>
    <property type="match status" value="1"/>
</dbReference>
<dbReference type="Gene3D" id="2.40.30.10">
    <property type="entry name" value="Translation factors"/>
    <property type="match status" value="1"/>
</dbReference>
<dbReference type="HAMAP" id="MF_01541">
    <property type="entry name" value="CysJ"/>
    <property type="match status" value="1"/>
</dbReference>
<dbReference type="InterPro" id="IPR010199">
    <property type="entry name" value="CysJ"/>
</dbReference>
<dbReference type="InterPro" id="IPR003097">
    <property type="entry name" value="CysJ-like_FAD-binding"/>
</dbReference>
<dbReference type="InterPro" id="IPR029758">
    <property type="entry name" value="CysJ_Proteobact"/>
</dbReference>
<dbReference type="InterPro" id="IPR017927">
    <property type="entry name" value="FAD-bd_FR_type"/>
</dbReference>
<dbReference type="InterPro" id="IPR001094">
    <property type="entry name" value="Flavdoxin-like"/>
</dbReference>
<dbReference type="InterPro" id="IPR008254">
    <property type="entry name" value="Flavodoxin/NO_synth"/>
</dbReference>
<dbReference type="InterPro" id="IPR001709">
    <property type="entry name" value="Flavoprot_Pyr_Nucl_cyt_Rdtase"/>
</dbReference>
<dbReference type="InterPro" id="IPR029039">
    <property type="entry name" value="Flavoprotein-like_sf"/>
</dbReference>
<dbReference type="InterPro" id="IPR039261">
    <property type="entry name" value="FNR_nucleotide-bd"/>
</dbReference>
<dbReference type="InterPro" id="IPR023173">
    <property type="entry name" value="NADPH_Cyt_P450_Rdtase_alpha"/>
</dbReference>
<dbReference type="InterPro" id="IPR001433">
    <property type="entry name" value="OxRdtase_FAD/NAD-bd"/>
</dbReference>
<dbReference type="InterPro" id="IPR017938">
    <property type="entry name" value="Riboflavin_synthase-like_b-brl"/>
</dbReference>
<dbReference type="NCBIfam" id="TIGR01931">
    <property type="entry name" value="cysJ"/>
    <property type="match status" value="1"/>
</dbReference>
<dbReference type="NCBIfam" id="NF004859">
    <property type="entry name" value="PRK06214.1"/>
    <property type="match status" value="1"/>
</dbReference>
<dbReference type="NCBIfam" id="NF008197">
    <property type="entry name" value="PRK10953.1"/>
    <property type="match status" value="1"/>
</dbReference>
<dbReference type="PANTHER" id="PTHR19384:SF128">
    <property type="entry name" value="NADPH OXIDOREDUCTASE A"/>
    <property type="match status" value="1"/>
</dbReference>
<dbReference type="PANTHER" id="PTHR19384">
    <property type="entry name" value="NITRIC OXIDE SYNTHASE-RELATED"/>
    <property type="match status" value="1"/>
</dbReference>
<dbReference type="Pfam" id="PF00667">
    <property type="entry name" value="FAD_binding_1"/>
    <property type="match status" value="1"/>
</dbReference>
<dbReference type="Pfam" id="PF00258">
    <property type="entry name" value="Flavodoxin_1"/>
    <property type="match status" value="1"/>
</dbReference>
<dbReference type="Pfam" id="PF00175">
    <property type="entry name" value="NAD_binding_1"/>
    <property type="match status" value="1"/>
</dbReference>
<dbReference type="PIRSF" id="PIRSF000207">
    <property type="entry name" value="SiR-FP_CysJ"/>
    <property type="match status" value="1"/>
</dbReference>
<dbReference type="PRINTS" id="PR00369">
    <property type="entry name" value="FLAVODOXIN"/>
</dbReference>
<dbReference type="PRINTS" id="PR00371">
    <property type="entry name" value="FPNCR"/>
</dbReference>
<dbReference type="SUPFAM" id="SSF52343">
    <property type="entry name" value="Ferredoxin reductase-like, C-terminal NADP-linked domain"/>
    <property type="match status" value="1"/>
</dbReference>
<dbReference type="SUPFAM" id="SSF52218">
    <property type="entry name" value="Flavoproteins"/>
    <property type="match status" value="1"/>
</dbReference>
<dbReference type="SUPFAM" id="SSF63380">
    <property type="entry name" value="Riboflavin synthase domain-like"/>
    <property type="match status" value="1"/>
</dbReference>
<dbReference type="PROSITE" id="PS51384">
    <property type="entry name" value="FAD_FR"/>
    <property type="match status" value="1"/>
</dbReference>
<dbReference type="PROSITE" id="PS50902">
    <property type="entry name" value="FLAVODOXIN_LIKE"/>
    <property type="match status" value="1"/>
</dbReference>
<keyword id="KW-0028">Amino-acid biosynthesis</keyword>
<keyword id="KW-0198">Cysteine biosynthesis</keyword>
<keyword id="KW-0249">Electron transport</keyword>
<keyword id="KW-0274">FAD</keyword>
<keyword id="KW-0285">Flavoprotein</keyword>
<keyword id="KW-0288">FMN</keyword>
<keyword id="KW-0521">NADP</keyword>
<keyword id="KW-0560">Oxidoreductase</keyword>
<keyword id="KW-0813">Transport</keyword>
<gene>
    <name evidence="1" type="primary">cysJ</name>
    <name type="ordered locus">UTI89_C3128</name>
</gene>
<feature type="chain" id="PRO_0000292966" description="Sulfite reductase [NADPH] flavoprotein alpha-component">
    <location>
        <begin position="1"/>
        <end position="599"/>
    </location>
</feature>
<feature type="domain" description="Flavodoxin-like" evidence="1">
    <location>
        <begin position="64"/>
        <end position="202"/>
    </location>
</feature>
<feature type="domain" description="FAD-binding FR-type" evidence="1">
    <location>
        <begin position="234"/>
        <end position="448"/>
    </location>
</feature>
<feature type="binding site" evidence="1">
    <location>
        <begin position="70"/>
        <end position="75"/>
    </location>
    <ligand>
        <name>FMN</name>
        <dbReference type="ChEBI" id="CHEBI:58210"/>
    </ligand>
</feature>
<feature type="binding site" evidence="1">
    <location>
        <begin position="117"/>
        <end position="120"/>
    </location>
    <ligand>
        <name>FMN</name>
        <dbReference type="ChEBI" id="CHEBI:58210"/>
    </ligand>
</feature>
<feature type="binding site" evidence="1">
    <location>
        <begin position="153"/>
        <end position="162"/>
    </location>
    <ligand>
        <name>FMN</name>
        <dbReference type="ChEBI" id="CHEBI:58210"/>
    </ligand>
</feature>
<feature type="binding site" evidence="1">
    <location>
        <position position="322"/>
    </location>
    <ligand>
        <name>FAD</name>
        <dbReference type="ChEBI" id="CHEBI:57692"/>
    </ligand>
</feature>
<feature type="binding site" evidence="1">
    <location>
        <position position="356"/>
    </location>
    <ligand>
        <name>FAD</name>
        <dbReference type="ChEBI" id="CHEBI:57692"/>
    </ligand>
</feature>
<feature type="binding site" evidence="1">
    <location>
        <begin position="386"/>
        <end position="389"/>
    </location>
    <ligand>
        <name>FAD</name>
        <dbReference type="ChEBI" id="CHEBI:57692"/>
    </ligand>
</feature>
<feature type="binding site" evidence="1">
    <location>
        <begin position="404"/>
        <end position="406"/>
    </location>
    <ligand>
        <name>FAD</name>
        <dbReference type="ChEBI" id="CHEBI:57692"/>
    </ligand>
</feature>
<feature type="binding site" evidence="1">
    <location>
        <position position="410"/>
    </location>
    <ligand>
        <name>FAD</name>
        <dbReference type="ChEBI" id="CHEBI:57692"/>
    </ligand>
</feature>
<feature type="binding site" evidence="1">
    <location>
        <begin position="419"/>
        <end position="422"/>
    </location>
    <ligand>
        <name>FAD</name>
        <dbReference type="ChEBI" id="CHEBI:57692"/>
    </ligand>
</feature>
<feature type="binding site" evidence="1">
    <location>
        <begin position="519"/>
        <end position="520"/>
    </location>
    <ligand>
        <name>NADP(+)</name>
        <dbReference type="ChEBI" id="CHEBI:58349"/>
    </ligand>
</feature>
<feature type="binding site" evidence="1">
    <location>
        <begin position="525"/>
        <end position="529"/>
    </location>
    <ligand>
        <name>NADP(+)</name>
        <dbReference type="ChEBI" id="CHEBI:58349"/>
    </ligand>
</feature>
<feature type="binding site" evidence="1">
    <location>
        <position position="561"/>
    </location>
    <ligand>
        <name>NADP(+)</name>
        <dbReference type="ChEBI" id="CHEBI:58349"/>
    </ligand>
</feature>
<feature type="binding site" evidence="1">
    <location>
        <position position="599"/>
    </location>
    <ligand>
        <name>FAD</name>
        <dbReference type="ChEBI" id="CHEBI:57692"/>
    </ligand>
</feature>
<evidence type="ECO:0000255" key="1">
    <source>
        <dbReference type="HAMAP-Rule" id="MF_01541"/>
    </source>
</evidence>
<name>CYSJ_ECOUT</name>
<organism>
    <name type="scientific">Escherichia coli (strain UTI89 / UPEC)</name>
    <dbReference type="NCBI Taxonomy" id="364106"/>
    <lineage>
        <taxon>Bacteria</taxon>
        <taxon>Pseudomonadati</taxon>
        <taxon>Pseudomonadota</taxon>
        <taxon>Gammaproteobacteria</taxon>
        <taxon>Enterobacterales</taxon>
        <taxon>Enterobacteriaceae</taxon>
        <taxon>Escherichia</taxon>
    </lineage>
</organism>
<protein>
    <recommendedName>
        <fullName evidence="1">Sulfite reductase [NADPH] flavoprotein alpha-component</fullName>
        <shortName evidence="1">SiR-FP</shortName>
        <ecNumber evidence="1">1.8.1.2</ecNumber>
    </recommendedName>
</protein>